<keyword id="KW-0067">ATP-binding</keyword>
<keyword id="KW-0963">Cytoplasm</keyword>
<keyword id="KW-0547">Nucleotide-binding</keyword>
<keyword id="KW-0548">Nucleotidyltransferase</keyword>
<keyword id="KW-1185">Reference proteome</keyword>
<keyword id="KW-0808">Transferase</keyword>
<keyword id="KW-0819">tRNA processing</keyword>
<name>TSAC_SHISS</name>
<organism>
    <name type="scientific">Shigella sonnei (strain Ss046)</name>
    <dbReference type="NCBI Taxonomy" id="300269"/>
    <lineage>
        <taxon>Bacteria</taxon>
        <taxon>Pseudomonadati</taxon>
        <taxon>Pseudomonadota</taxon>
        <taxon>Gammaproteobacteria</taxon>
        <taxon>Enterobacterales</taxon>
        <taxon>Enterobacteriaceae</taxon>
        <taxon>Shigella</taxon>
    </lineage>
</organism>
<reference key="1">
    <citation type="journal article" date="2005" name="Nucleic Acids Res.">
        <title>Genome dynamics and diversity of Shigella species, the etiologic agents of bacillary dysentery.</title>
        <authorList>
            <person name="Yang F."/>
            <person name="Yang J."/>
            <person name="Zhang X."/>
            <person name="Chen L."/>
            <person name="Jiang Y."/>
            <person name="Yan Y."/>
            <person name="Tang X."/>
            <person name="Wang J."/>
            <person name="Xiong Z."/>
            <person name="Dong J."/>
            <person name="Xue Y."/>
            <person name="Zhu Y."/>
            <person name="Xu X."/>
            <person name="Sun L."/>
            <person name="Chen S."/>
            <person name="Nie H."/>
            <person name="Peng J."/>
            <person name="Xu J."/>
            <person name="Wang Y."/>
            <person name="Yuan Z."/>
            <person name="Wen Y."/>
            <person name="Yao Z."/>
            <person name="Shen Y."/>
            <person name="Qiang B."/>
            <person name="Hou Y."/>
            <person name="Yu J."/>
            <person name="Jin Q."/>
        </authorList>
    </citation>
    <scope>NUCLEOTIDE SEQUENCE [LARGE SCALE GENOMIC DNA]</scope>
    <source>
        <strain>Ss046</strain>
    </source>
</reference>
<sequence length="190" mass="20641">MNNNLQGDAIAAAIDVLNEERVIAYPTEAVFGVGCDPDSETAVMRLLELKQRPVDKGLILIAANYEQLKPYIDDTMLTDAQRETIFSRWPGPVTFVFPAPATTPRWLTGRFDSLAVRVTDHPLVVALCQAYGKPLVSTSANLSGLPPCRTVDEVRAQFGAAFPVVPGETGGRLNPSEIRDALTGELFRQG</sequence>
<evidence type="ECO:0000255" key="1">
    <source>
        <dbReference type="HAMAP-Rule" id="MF_01852"/>
    </source>
</evidence>
<gene>
    <name evidence="1" type="primary">tsaC</name>
    <name type="synonym">rimN</name>
    <name type="ordered locus">SSON_3423</name>
</gene>
<accession>Q3YWX6</accession>
<feature type="chain" id="PRO_0000352996" description="Threonylcarbamoyl-AMP synthase">
    <location>
        <begin position="1"/>
        <end position="190"/>
    </location>
</feature>
<feature type="domain" description="YrdC-like" evidence="1">
    <location>
        <begin position="7"/>
        <end position="190"/>
    </location>
</feature>
<comment type="function">
    <text evidence="1">Required for the formation of a threonylcarbamoyl group on adenosine at position 37 (t(6)A37) in tRNAs that read codons beginning with adenine. Catalyzes the conversion of L-threonine, HCO(3)(-)/CO(2) and ATP to give threonylcarbamoyl-AMP (TC-AMP) as the acyladenylate intermediate, with the release of diphosphate.</text>
</comment>
<comment type="catalytic activity">
    <reaction evidence="1">
        <text>L-threonine + hydrogencarbonate + ATP = L-threonylcarbamoyladenylate + diphosphate + H2O</text>
        <dbReference type="Rhea" id="RHEA:36407"/>
        <dbReference type="ChEBI" id="CHEBI:15377"/>
        <dbReference type="ChEBI" id="CHEBI:17544"/>
        <dbReference type="ChEBI" id="CHEBI:30616"/>
        <dbReference type="ChEBI" id="CHEBI:33019"/>
        <dbReference type="ChEBI" id="CHEBI:57926"/>
        <dbReference type="ChEBI" id="CHEBI:73682"/>
        <dbReference type="EC" id="2.7.7.87"/>
    </reaction>
</comment>
<comment type="subcellular location">
    <subcellularLocation>
        <location evidence="1">Cytoplasm</location>
    </subcellularLocation>
</comment>
<comment type="similarity">
    <text evidence="1">Belongs to the SUA5 family. TsaC subfamily.</text>
</comment>
<dbReference type="EC" id="2.7.7.87" evidence="1"/>
<dbReference type="EMBL" id="CP000038">
    <property type="protein sequence ID" value="AAZ89986.1"/>
    <property type="molecule type" value="Genomic_DNA"/>
</dbReference>
<dbReference type="RefSeq" id="WP_001297709.1">
    <property type="nucleotide sequence ID" value="NC_007384.1"/>
</dbReference>
<dbReference type="SMR" id="Q3YWX6"/>
<dbReference type="GeneID" id="75204135"/>
<dbReference type="KEGG" id="ssn:SSON_3423"/>
<dbReference type="HOGENOM" id="CLU_031397_6_0_6"/>
<dbReference type="Proteomes" id="UP000002529">
    <property type="component" value="Chromosome"/>
</dbReference>
<dbReference type="GO" id="GO:0005737">
    <property type="term" value="C:cytoplasm"/>
    <property type="evidence" value="ECO:0007669"/>
    <property type="project" value="UniProtKB-SubCell"/>
</dbReference>
<dbReference type="GO" id="GO:0005524">
    <property type="term" value="F:ATP binding"/>
    <property type="evidence" value="ECO:0007669"/>
    <property type="project" value="UniProtKB-UniRule"/>
</dbReference>
<dbReference type="GO" id="GO:0003725">
    <property type="term" value="F:double-stranded RNA binding"/>
    <property type="evidence" value="ECO:0007669"/>
    <property type="project" value="InterPro"/>
</dbReference>
<dbReference type="GO" id="GO:0061710">
    <property type="term" value="F:L-threonylcarbamoyladenylate synthase"/>
    <property type="evidence" value="ECO:0007669"/>
    <property type="project" value="UniProtKB-EC"/>
</dbReference>
<dbReference type="GO" id="GO:0000049">
    <property type="term" value="F:tRNA binding"/>
    <property type="evidence" value="ECO:0007669"/>
    <property type="project" value="TreeGrafter"/>
</dbReference>
<dbReference type="GO" id="GO:0006450">
    <property type="term" value="P:regulation of translational fidelity"/>
    <property type="evidence" value="ECO:0007669"/>
    <property type="project" value="TreeGrafter"/>
</dbReference>
<dbReference type="GO" id="GO:0002949">
    <property type="term" value="P:tRNA threonylcarbamoyladenosine modification"/>
    <property type="evidence" value="ECO:0007669"/>
    <property type="project" value="UniProtKB-UniRule"/>
</dbReference>
<dbReference type="FunFam" id="3.90.870.10:FF:000004">
    <property type="entry name" value="Threonylcarbamoyl-AMP synthase"/>
    <property type="match status" value="1"/>
</dbReference>
<dbReference type="Gene3D" id="3.90.870.10">
    <property type="entry name" value="DHBP synthase"/>
    <property type="match status" value="1"/>
</dbReference>
<dbReference type="HAMAP" id="MF_01852">
    <property type="entry name" value="TsaC"/>
    <property type="match status" value="1"/>
</dbReference>
<dbReference type="InterPro" id="IPR017945">
    <property type="entry name" value="DHBP_synth_RibB-like_a/b_dom"/>
</dbReference>
<dbReference type="InterPro" id="IPR006070">
    <property type="entry name" value="Sua5-like_dom"/>
</dbReference>
<dbReference type="InterPro" id="IPR023535">
    <property type="entry name" value="TC-AMP_synthase"/>
</dbReference>
<dbReference type="InterPro" id="IPR050156">
    <property type="entry name" value="TC-AMP_synthase_SUA5"/>
</dbReference>
<dbReference type="NCBIfam" id="NF007919">
    <property type="entry name" value="PRK10634.1"/>
    <property type="match status" value="1"/>
</dbReference>
<dbReference type="PANTHER" id="PTHR17490">
    <property type="entry name" value="SUA5"/>
    <property type="match status" value="1"/>
</dbReference>
<dbReference type="PANTHER" id="PTHR17490:SF18">
    <property type="entry name" value="THREONYLCARBAMOYL-AMP SYNTHASE"/>
    <property type="match status" value="1"/>
</dbReference>
<dbReference type="Pfam" id="PF01300">
    <property type="entry name" value="Sua5_yciO_yrdC"/>
    <property type="match status" value="1"/>
</dbReference>
<dbReference type="SUPFAM" id="SSF55821">
    <property type="entry name" value="YrdC/RibB"/>
    <property type="match status" value="1"/>
</dbReference>
<dbReference type="PROSITE" id="PS51163">
    <property type="entry name" value="YRDC"/>
    <property type="match status" value="1"/>
</dbReference>
<proteinExistence type="inferred from homology"/>
<protein>
    <recommendedName>
        <fullName evidence="1">Threonylcarbamoyl-AMP synthase</fullName>
        <shortName evidence="1">TC-AMP synthase</shortName>
        <ecNumber evidence="1">2.7.7.87</ecNumber>
    </recommendedName>
    <alternativeName>
        <fullName evidence="1">L-threonylcarbamoyladenylate synthase</fullName>
    </alternativeName>
    <alternativeName>
        <fullName evidence="1">t(6)A37 threonylcarbamoyladenosine biosynthesis protein TsaC</fullName>
    </alternativeName>
    <alternativeName>
        <fullName evidence="1">tRNA threonylcarbamoyladenosine biosynthesis protein TsaC</fullName>
    </alternativeName>
</protein>